<evidence type="ECO:0000255" key="1">
    <source>
        <dbReference type="HAMAP-Rule" id="MF_03055"/>
    </source>
</evidence>
<keyword id="KW-0489">Methyltransferase</keyword>
<keyword id="KW-0539">Nucleus</keyword>
<keyword id="KW-1185">Reference proteome</keyword>
<keyword id="KW-0694">RNA-binding</keyword>
<keyword id="KW-0949">S-adenosyl-L-methionine</keyword>
<keyword id="KW-0808">Transferase</keyword>
<keyword id="KW-0819">tRNA processing</keyword>
<keyword id="KW-0820">tRNA-binding</keyword>
<accession>B4M703</accession>
<sequence length="247" mass="28463">MVTNSQEGETLPATSSVTGLPQKRFYRQRAHSNPIADHSFDYPARPEDVDWRSLYPNIGSEQQVEFADIGCGYGGFLVTLGEMFPDKLAIGMEIRVKVSDYVIDRIAALRMKNAETSAYQNIACIRTNAMKYLPNYFQKSQLEKMFFLYPDPHFKRAKHKWRIINQALLSEYAYVLRSGGLVYTMTDVEDLHKWIVSHMTQHPLYERLTDEEANADPITPKLYQSSEEGAKVVRNKGDHFLAIFRRI</sequence>
<organism>
    <name type="scientific">Drosophila virilis</name>
    <name type="common">Fruit fly</name>
    <dbReference type="NCBI Taxonomy" id="7244"/>
    <lineage>
        <taxon>Eukaryota</taxon>
        <taxon>Metazoa</taxon>
        <taxon>Ecdysozoa</taxon>
        <taxon>Arthropoda</taxon>
        <taxon>Hexapoda</taxon>
        <taxon>Insecta</taxon>
        <taxon>Pterygota</taxon>
        <taxon>Neoptera</taxon>
        <taxon>Endopterygota</taxon>
        <taxon>Diptera</taxon>
        <taxon>Brachycera</taxon>
        <taxon>Muscomorpha</taxon>
        <taxon>Ephydroidea</taxon>
        <taxon>Drosophilidae</taxon>
        <taxon>Drosophila</taxon>
    </lineage>
</organism>
<feature type="chain" id="PRO_0000370576" description="tRNA (guanine-N(7)-)-methyltransferase">
    <location>
        <begin position="1"/>
        <end position="247"/>
    </location>
</feature>
<feature type="active site" evidence="1">
    <location>
        <position position="151"/>
    </location>
</feature>
<feature type="binding site" evidence="1">
    <location>
        <position position="70"/>
    </location>
    <ligand>
        <name>S-adenosyl-L-methionine</name>
        <dbReference type="ChEBI" id="CHEBI:59789"/>
    </ligand>
</feature>
<feature type="binding site" evidence="1">
    <location>
        <begin position="93"/>
        <end position="94"/>
    </location>
    <ligand>
        <name>S-adenosyl-L-methionine</name>
        <dbReference type="ChEBI" id="CHEBI:59789"/>
    </ligand>
</feature>
<feature type="binding site" evidence="1">
    <location>
        <begin position="128"/>
        <end position="129"/>
    </location>
    <ligand>
        <name>S-adenosyl-L-methionine</name>
        <dbReference type="ChEBI" id="CHEBI:59789"/>
    </ligand>
</feature>
<feature type="binding site" evidence="1">
    <location>
        <position position="148"/>
    </location>
    <ligand>
        <name>S-adenosyl-L-methionine</name>
        <dbReference type="ChEBI" id="CHEBI:59789"/>
    </ligand>
</feature>
<feature type="binding site" evidence="1">
    <location>
        <begin position="226"/>
        <end position="228"/>
    </location>
    <ligand>
        <name>S-adenosyl-L-methionine</name>
        <dbReference type="ChEBI" id="CHEBI:59789"/>
    </ligand>
</feature>
<name>TRMB_DROVI</name>
<protein>
    <recommendedName>
        <fullName evidence="1">tRNA (guanine-N(7)-)-methyltransferase</fullName>
        <ecNumber evidence="1">2.1.1.33</ecNumber>
    </recommendedName>
    <alternativeName>
        <fullName evidence="1">tRNA (guanine(46)-N(7))-methyltransferase</fullName>
    </alternativeName>
    <alternativeName>
        <fullName evidence="1">tRNA(m7G46)-methyltransferase</fullName>
    </alternativeName>
</protein>
<reference key="1">
    <citation type="journal article" date="2007" name="Nature">
        <title>Evolution of genes and genomes on the Drosophila phylogeny.</title>
        <authorList>
            <consortium name="Drosophila 12 genomes consortium"/>
        </authorList>
    </citation>
    <scope>NUCLEOTIDE SEQUENCE [LARGE SCALE GENOMIC DNA]</scope>
    <source>
        <strain>Tucson 15010-1051.87</strain>
    </source>
</reference>
<comment type="function">
    <text evidence="1">Catalyzes the formation of N(7)-methylguanine at position 46 (m7G46) in tRNA.</text>
</comment>
<comment type="catalytic activity">
    <reaction evidence="1">
        <text>guanosine(46) in tRNA + S-adenosyl-L-methionine = N(7)-methylguanosine(46) in tRNA + S-adenosyl-L-homocysteine</text>
        <dbReference type="Rhea" id="RHEA:42708"/>
        <dbReference type="Rhea" id="RHEA-COMP:10188"/>
        <dbReference type="Rhea" id="RHEA-COMP:10189"/>
        <dbReference type="ChEBI" id="CHEBI:57856"/>
        <dbReference type="ChEBI" id="CHEBI:59789"/>
        <dbReference type="ChEBI" id="CHEBI:74269"/>
        <dbReference type="ChEBI" id="CHEBI:74480"/>
        <dbReference type="EC" id="2.1.1.33"/>
    </reaction>
</comment>
<comment type="pathway">
    <text evidence="1">tRNA modification; N(7)-methylguanine-tRNA biosynthesis.</text>
</comment>
<comment type="subcellular location">
    <subcellularLocation>
        <location evidence="1">Nucleus</location>
    </subcellularLocation>
</comment>
<comment type="similarity">
    <text evidence="1">Belongs to the class I-like SAM-binding methyltransferase superfamily. TrmB family.</text>
</comment>
<dbReference type="EC" id="2.1.1.33" evidence="1"/>
<dbReference type="EMBL" id="CH940653">
    <property type="protein sequence ID" value="EDW62570.1"/>
    <property type="molecule type" value="Genomic_DNA"/>
</dbReference>
<dbReference type="SMR" id="B4M703"/>
<dbReference type="FunCoup" id="B4M703">
    <property type="interactions" value="995"/>
</dbReference>
<dbReference type="STRING" id="7244.B4M703"/>
<dbReference type="EnsemblMetazoa" id="FBtr0232814">
    <property type="protein sequence ID" value="FBpp0231306"/>
    <property type="gene ID" value="FBgn0204068"/>
</dbReference>
<dbReference type="EnsemblMetazoa" id="XM_002057048.3">
    <property type="protein sequence ID" value="XP_002057084.1"/>
    <property type="gene ID" value="LOC6633719"/>
</dbReference>
<dbReference type="GeneID" id="6633719"/>
<dbReference type="KEGG" id="dvi:6633719"/>
<dbReference type="eggNOG" id="KOG3115">
    <property type="taxonomic scope" value="Eukaryota"/>
</dbReference>
<dbReference type="HOGENOM" id="CLU_050910_3_0_1"/>
<dbReference type="InParanoid" id="B4M703"/>
<dbReference type="OMA" id="LPNYFAK"/>
<dbReference type="OrthoDB" id="47276at2759"/>
<dbReference type="PhylomeDB" id="B4M703"/>
<dbReference type="UniPathway" id="UPA00989"/>
<dbReference type="Proteomes" id="UP000008792">
    <property type="component" value="Unassembled WGS sequence"/>
</dbReference>
<dbReference type="GO" id="GO:0005634">
    <property type="term" value="C:nucleus"/>
    <property type="evidence" value="ECO:0007669"/>
    <property type="project" value="UniProtKB-SubCell"/>
</dbReference>
<dbReference type="GO" id="GO:0043527">
    <property type="term" value="C:tRNA methyltransferase complex"/>
    <property type="evidence" value="ECO:0007669"/>
    <property type="project" value="TreeGrafter"/>
</dbReference>
<dbReference type="GO" id="GO:0008176">
    <property type="term" value="F:tRNA (guanine(46)-N7)-methyltransferase activity"/>
    <property type="evidence" value="ECO:0007669"/>
    <property type="project" value="UniProtKB-UniRule"/>
</dbReference>
<dbReference type="GO" id="GO:0000049">
    <property type="term" value="F:tRNA binding"/>
    <property type="evidence" value="ECO:0007669"/>
    <property type="project" value="UniProtKB-UniRule"/>
</dbReference>
<dbReference type="FunFam" id="3.40.50.150:FF:000060">
    <property type="entry name" value="tRNA (guanine-N(7)-)-methyltransferase"/>
    <property type="match status" value="1"/>
</dbReference>
<dbReference type="Gene3D" id="3.40.50.150">
    <property type="entry name" value="Vaccinia Virus protein VP39"/>
    <property type="match status" value="1"/>
</dbReference>
<dbReference type="HAMAP" id="MF_03055">
    <property type="entry name" value="tRNA_methyltr_TrmB_euk"/>
    <property type="match status" value="1"/>
</dbReference>
<dbReference type="InterPro" id="IPR029063">
    <property type="entry name" value="SAM-dependent_MTases_sf"/>
</dbReference>
<dbReference type="InterPro" id="IPR025763">
    <property type="entry name" value="Trm8_euk"/>
</dbReference>
<dbReference type="InterPro" id="IPR003358">
    <property type="entry name" value="tRNA_(Gua-N-7)_MeTrfase_Trmb"/>
</dbReference>
<dbReference type="NCBIfam" id="TIGR00091">
    <property type="entry name" value="tRNA (guanosine(46)-N7)-methyltransferase TrmB"/>
    <property type="match status" value="1"/>
</dbReference>
<dbReference type="PANTHER" id="PTHR23417">
    <property type="entry name" value="3-DEOXY-D-MANNO-OCTULOSONIC-ACID TRANSFERASE/TRNA GUANINE-N 7 - -METHYLTRANSFERASE"/>
    <property type="match status" value="1"/>
</dbReference>
<dbReference type="PANTHER" id="PTHR23417:SF16">
    <property type="entry name" value="TRNA (GUANINE-N(7)-)-METHYLTRANSFERASE"/>
    <property type="match status" value="1"/>
</dbReference>
<dbReference type="Pfam" id="PF02390">
    <property type="entry name" value="Methyltransf_4"/>
    <property type="match status" value="1"/>
</dbReference>
<dbReference type="SUPFAM" id="SSF53335">
    <property type="entry name" value="S-adenosyl-L-methionine-dependent methyltransferases"/>
    <property type="match status" value="1"/>
</dbReference>
<dbReference type="PROSITE" id="PS51625">
    <property type="entry name" value="SAM_MT_TRMB"/>
    <property type="match status" value="1"/>
</dbReference>
<proteinExistence type="inferred from homology"/>
<gene>
    <name type="ORF">GJ16889</name>
</gene>